<evidence type="ECO:0000256" key="1">
    <source>
        <dbReference type="SAM" id="MobiDB-lite"/>
    </source>
</evidence>
<evidence type="ECO:0000305" key="2"/>
<protein>
    <recommendedName>
        <fullName>FlaA locus 22.9 kDa protein</fullName>
    </recommendedName>
    <alternativeName>
        <fullName>ORF 6</fullName>
    </alternativeName>
</protein>
<sequence>MSGKKKESGKFRSVLLIIILPLMFLLIAGGIVLWAAGINVLKPIQDAAAKTPVLKELVPETENKKGAASSKDSSNTAALEKTIKDQKSEISILNKDLETSKSEIDRLNQKIRSLEKTAEDQKKSSEDHTEGSADSKASSENDKVISVYKSMDSGKAAKIIAQLKEQEALKILNGLSKKQLADILAKMTPEQAATYTEKIAASQE</sequence>
<accession>P23454</accession>
<gene>
    <name type="primary">ylxF</name>
    <name type="ordered locus">BSU16260</name>
</gene>
<keyword id="KW-1005">Bacterial flagellum biogenesis</keyword>
<keyword id="KW-1185">Reference proteome</keyword>
<name>YLXF_BACSU</name>
<proteinExistence type="predicted"/>
<feature type="chain" id="PRO_0000180980" description="FlaA locus 22.9 kDa protein">
    <location>
        <begin position="1"/>
        <end position="204"/>
    </location>
</feature>
<feature type="region of interest" description="Disordered" evidence="1">
    <location>
        <begin position="115"/>
        <end position="140"/>
    </location>
</feature>
<feature type="sequence conflict" description="In Ref. 1; CAA39525." evidence="2" ref="1">
    <original>SQE</original>
    <variation>QPRIGGMKGEAA</variation>
    <location>
        <begin position="202"/>
        <end position="204"/>
    </location>
</feature>
<dbReference type="EMBL" id="X56049">
    <property type="protein sequence ID" value="CAA39525.1"/>
    <property type="molecule type" value="Genomic_DNA"/>
</dbReference>
<dbReference type="EMBL" id="AL009126">
    <property type="protein sequence ID" value="CAB13499.2"/>
    <property type="molecule type" value="Genomic_DNA"/>
</dbReference>
<dbReference type="PIR" id="F42365">
    <property type="entry name" value="F42365"/>
</dbReference>
<dbReference type="RefSeq" id="NP_389508.2">
    <property type="nucleotide sequence ID" value="NC_000964.3"/>
</dbReference>
<dbReference type="RefSeq" id="WP_003231975.1">
    <property type="nucleotide sequence ID" value="NZ_OZ025638.1"/>
</dbReference>
<dbReference type="SMR" id="P23454"/>
<dbReference type="FunCoup" id="P23454">
    <property type="interactions" value="94"/>
</dbReference>
<dbReference type="STRING" id="224308.BSU16260"/>
<dbReference type="PaxDb" id="224308-BSU16260"/>
<dbReference type="EnsemblBacteria" id="CAB13499">
    <property type="protein sequence ID" value="CAB13499"/>
    <property type="gene ID" value="BSU_16260"/>
</dbReference>
<dbReference type="GeneID" id="940140"/>
<dbReference type="KEGG" id="bsu:BSU16260"/>
<dbReference type="PATRIC" id="fig|224308.179.peg.1766"/>
<dbReference type="eggNOG" id="COG3334">
    <property type="taxonomic scope" value="Bacteria"/>
</dbReference>
<dbReference type="InParanoid" id="P23454"/>
<dbReference type="OrthoDB" id="2872654at2"/>
<dbReference type="BioCyc" id="BSUB:BSU16260-MONOMER"/>
<dbReference type="Proteomes" id="UP000001570">
    <property type="component" value="Chromosome"/>
</dbReference>
<dbReference type="GO" id="GO:0044781">
    <property type="term" value="P:bacterial-type flagellum organization"/>
    <property type="evidence" value="ECO:0007669"/>
    <property type="project" value="UniProtKB-KW"/>
</dbReference>
<dbReference type="Gene3D" id="1.25.60.10">
    <property type="entry name" value="MgtE N-terminal domain-like"/>
    <property type="match status" value="1"/>
</dbReference>
<dbReference type="InterPro" id="IPR006668">
    <property type="entry name" value="Mg_transptr_MgtE_intracell_dom"/>
</dbReference>
<dbReference type="InterPro" id="IPR038076">
    <property type="entry name" value="MgtE_N_sf"/>
</dbReference>
<dbReference type="Pfam" id="PF03448">
    <property type="entry name" value="MgtE_N"/>
    <property type="match status" value="1"/>
</dbReference>
<dbReference type="SUPFAM" id="SSF158791">
    <property type="entry name" value="MgtE N-terminal domain-like"/>
    <property type="match status" value="1"/>
</dbReference>
<organism>
    <name type="scientific">Bacillus subtilis (strain 168)</name>
    <dbReference type="NCBI Taxonomy" id="224308"/>
    <lineage>
        <taxon>Bacteria</taxon>
        <taxon>Bacillati</taxon>
        <taxon>Bacillota</taxon>
        <taxon>Bacilli</taxon>
        <taxon>Bacillales</taxon>
        <taxon>Bacillaceae</taxon>
        <taxon>Bacillus</taxon>
    </lineage>
</organism>
<reference key="1">
    <citation type="journal article" date="1991" name="J. Bacteriol.">
        <title>The flaA locus of Bacillus subtilis is part of a large operon coding for flagellar structures, motility functions, and an ATPase-like polypeptide.</title>
        <authorList>
            <person name="Albertini A.M."/>
            <person name="Caramori T."/>
            <person name="Crabb W.D."/>
            <person name="Scoffone F."/>
            <person name="Galizzi A."/>
        </authorList>
    </citation>
    <scope>NUCLEOTIDE SEQUENCE [GENOMIC DNA]</scope>
    <source>
        <strain>168</strain>
    </source>
</reference>
<reference key="2">
    <citation type="journal article" date="1997" name="Nature">
        <title>The complete genome sequence of the Gram-positive bacterium Bacillus subtilis.</title>
        <authorList>
            <person name="Kunst F."/>
            <person name="Ogasawara N."/>
            <person name="Moszer I."/>
            <person name="Albertini A.M."/>
            <person name="Alloni G."/>
            <person name="Azevedo V."/>
            <person name="Bertero M.G."/>
            <person name="Bessieres P."/>
            <person name="Bolotin A."/>
            <person name="Borchert S."/>
            <person name="Borriss R."/>
            <person name="Boursier L."/>
            <person name="Brans A."/>
            <person name="Braun M."/>
            <person name="Brignell S.C."/>
            <person name="Bron S."/>
            <person name="Brouillet S."/>
            <person name="Bruschi C.V."/>
            <person name="Caldwell B."/>
            <person name="Capuano V."/>
            <person name="Carter N.M."/>
            <person name="Choi S.-K."/>
            <person name="Codani J.-J."/>
            <person name="Connerton I.F."/>
            <person name="Cummings N.J."/>
            <person name="Daniel R.A."/>
            <person name="Denizot F."/>
            <person name="Devine K.M."/>
            <person name="Duesterhoeft A."/>
            <person name="Ehrlich S.D."/>
            <person name="Emmerson P.T."/>
            <person name="Entian K.-D."/>
            <person name="Errington J."/>
            <person name="Fabret C."/>
            <person name="Ferrari E."/>
            <person name="Foulger D."/>
            <person name="Fritz C."/>
            <person name="Fujita M."/>
            <person name="Fujita Y."/>
            <person name="Fuma S."/>
            <person name="Galizzi A."/>
            <person name="Galleron N."/>
            <person name="Ghim S.-Y."/>
            <person name="Glaser P."/>
            <person name="Goffeau A."/>
            <person name="Golightly E.J."/>
            <person name="Grandi G."/>
            <person name="Guiseppi G."/>
            <person name="Guy B.J."/>
            <person name="Haga K."/>
            <person name="Haiech J."/>
            <person name="Harwood C.R."/>
            <person name="Henaut A."/>
            <person name="Hilbert H."/>
            <person name="Holsappel S."/>
            <person name="Hosono S."/>
            <person name="Hullo M.-F."/>
            <person name="Itaya M."/>
            <person name="Jones L.-M."/>
            <person name="Joris B."/>
            <person name="Karamata D."/>
            <person name="Kasahara Y."/>
            <person name="Klaerr-Blanchard M."/>
            <person name="Klein C."/>
            <person name="Kobayashi Y."/>
            <person name="Koetter P."/>
            <person name="Koningstein G."/>
            <person name="Krogh S."/>
            <person name="Kumano M."/>
            <person name="Kurita K."/>
            <person name="Lapidus A."/>
            <person name="Lardinois S."/>
            <person name="Lauber J."/>
            <person name="Lazarevic V."/>
            <person name="Lee S.-M."/>
            <person name="Levine A."/>
            <person name="Liu H."/>
            <person name="Masuda S."/>
            <person name="Mauel C."/>
            <person name="Medigue C."/>
            <person name="Medina N."/>
            <person name="Mellado R.P."/>
            <person name="Mizuno M."/>
            <person name="Moestl D."/>
            <person name="Nakai S."/>
            <person name="Noback M."/>
            <person name="Noone D."/>
            <person name="O'Reilly M."/>
            <person name="Ogawa K."/>
            <person name="Ogiwara A."/>
            <person name="Oudega B."/>
            <person name="Park S.-H."/>
            <person name="Parro V."/>
            <person name="Pohl T.M."/>
            <person name="Portetelle D."/>
            <person name="Porwollik S."/>
            <person name="Prescott A.M."/>
            <person name="Presecan E."/>
            <person name="Pujic P."/>
            <person name="Purnelle B."/>
            <person name="Rapoport G."/>
            <person name="Rey M."/>
            <person name="Reynolds S."/>
            <person name="Rieger M."/>
            <person name="Rivolta C."/>
            <person name="Rocha E."/>
            <person name="Roche B."/>
            <person name="Rose M."/>
            <person name="Sadaie Y."/>
            <person name="Sato T."/>
            <person name="Scanlan E."/>
            <person name="Schleich S."/>
            <person name="Schroeter R."/>
            <person name="Scoffone F."/>
            <person name="Sekiguchi J."/>
            <person name="Sekowska A."/>
            <person name="Seror S.J."/>
            <person name="Serror P."/>
            <person name="Shin B.-S."/>
            <person name="Soldo B."/>
            <person name="Sorokin A."/>
            <person name="Tacconi E."/>
            <person name="Takagi T."/>
            <person name="Takahashi H."/>
            <person name="Takemaru K."/>
            <person name="Takeuchi M."/>
            <person name="Tamakoshi A."/>
            <person name="Tanaka T."/>
            <person name="Terpstra P."/>
            <person name="Tognoni A."/>
            <person name="Tosato V."/>
            <person name="Uchiyama S."/>
            <person name="Vandenbol M."/>
            <person name="Vannier F."/>
            <person name="Vassarotti A."/>
            <person name="Viari A."/>
            <person name="Wambutt R."/>
            <person name="Wedler E."/>
            <person name="Wedler H."/>
            <person name="Weitzenegger T."/>
            <person name="Winters P."/>
            <person name="Wipat A."/>
            <person name="Yamamoto H."/>
            <person name="Yamane K."/>
            <person name="Yasumoto K."/>
            <person name="Yata K."/>
            <person name="Yoshida K."/>
            <person name="Yoshikawa H.-F."/>
            <person name="Zumstein E."/>
            <person name="Yoshikawa H."/>
            <person name="Danchin A."/>
        </authorList>
    </citation>
    <scope>NUCLEOTIDE SEQUENCE [LARGE SCALE GENOMIC DNA]</scope>
    <source>
        <strain>168</strain>
    </source>
</reference>
<reference key="3">
    <citation type="journal article" date="2009" name="Microbiology">
        <title>From a consortium sequence to a unified sequence: the Bacillus subtilis 168 reference genome a decade later.</title>
        <authorList>
            <person name="Barbe V."/>
            <person name="Cruveiller S."/>
            <person name="Kunst F."/>
            <person name="Lenoble P."/>
            <person name="Meurice G."/>
            <person name="Sekowska A."/>
            <person name="Vallenet D."/>
            <person name="Wang T."/>
            <person name="Moszer I."/>
            <person name="Medigue C."/>
            <person name="Danchin A."/>
        </authorList>
    </citation>
    <scope>SEQUENCE REVISION TO C-TERMINUS</scope>
</reference>